<accession>A4J7D9</accession>
<gene>
    <name evidence="1" type="primary">ybeY</name>
    <name type="ordered locus">Dred_2482</name>
</gene>
<protein>
    <recommendedName>
        <fullName evidence="1">Endoribonuclease YbeY</fullName>
        <ecNumber evidence="1">3.1.-.-</ecNumber>
    </recommendedName>
</protein>
<feature type="chain" id="PRO_1000073903" description="Endoribonuclease YbeY">
    <location>
        <begin position="1"/>
        <end position="153"/>
    </location>
</feature>
<feature type="binding site" evidence="1">
    <location>
        <position position="119"/>
    </location>
    <ligand>
        <name>Zn(2+)</name>
        <dbReference type="ChEBI" id="CHEBI:29105"/>
        <note>catalytic</note>
    </ligand>
</feature>
<feature type="binding site" evidence="1">
    <location>
        <position position="123"/>
    </location>
    <ligand>
        <name>Zn(2+)</name>
        <dbReference type="ChEBI" id="CHEBI:29105"/>
        <note>catalytic</note>
    </ligand>
</feature>
<feature type="binding site" evidence="1">
    <location>
        <position position="129"/>
    </location>
    <ligand>
        <name>Zn(2+)</name>
        <dbReference type="ChEBI" id="CHEBI:29105"/>
        <note>catalytic</note>
    </ligand>
</feature>
<comment type="function">
    <text evidence="1">Single strand-specific metallo-endoribonuclease involved in late-stage 70S ribosome quality control and in maturation of the 3' terminus of the 16S rRNA.</text>
</comment>
<comment type="cofactor">
    <cofactor evidence="1">
        <name>Zn(2+)</name>
        <dbReference type="ChEBI" id="CHEBI:29105"/>
    </cofactor>
    <text evidence="1">Binds 1 zinc ion.</text>
</comment>
<comment type="subcellular location">
    <subcellularLocation>
        <location evidence="1">Cytoplasm</location>
    </subcellularLocation>
</comment>
<comment type="similarity">
    <text evidence="1">Belongs to the endoribonuclease YbeY family.</text>
</comment>
<sequence length="153" mass="17225">MAVLVNNLQEEISVEENLLKLVESVVKVSLESEGYSPDAEVGLIFVDDNYIRSLNAEYRGIDKATDVLSFALNEGEEMPEEEEAEDLLGDIVISLPTAQRQAAEYGHSFNREVAYLTAHGSLHLLGYDHMTEEDRQVMRQKEEGILERLGINR</sequence>
<reference key="1">
    <citation type="submission" date="2007-03" db="EMBL/GenBank/DDBJ databases">
        <title>Complete sequence of Desulfotomaculum reducens MI-1.</title>
        <authorList>
            <consortium name="US DOE Joint Genome Institute"/>
            <person name="Copeland A."/>
            <person name="Lucas S."/>
            <person name="Lapidus A."/>
            <person name="Barry K."/>
            <person name="Detter J.C."/>
            <person name="Glavina del Rio T."/>
            <person name="Hammon N."/>
            <person name="Israni S."/>
            <person name="Dalin E."/>
            <person name="Tice H."/>
            <person name="Pitluck S."/>
            <person name="Sims D."/>
            <person name="Brettin T."/>
            <person name="Bruce D."/>
            <person name="Han C."/>
            <person name="Tapia R."/>
            <person name="Schmutz J."/>
            <person name="Larimer F."/>
            <person name="Land M."/>
            <person name="Hauser L."/>
            <person name="Kyrpides N."/>
            <person name="Kim E."/>
            <person name="Tebo B.M."/>
            <person name="Richardson P."/>
        </authorList>
    </citation>
    <scope>NUCLEOTIDE SEQUENCE [LARGE SCALE GENOMIC DNA]</scope>
    <source>
        <strain>ATCC BAA-1160 / DSM 100696 / MI-1</strain>
    </source>
</reference>
<keyword id="KW-0963">Cytoplasm</keyword>
<keyword id="KW-0255">Endonuclease</keyword>
<keyword id="KW-0378">Hydrolase</keyword>
<keyword id="KW-0479">Metal-binding</keyword>
<keyword id="KW-0540">Nuclease</keyword>
<keyword id="KW-1185">Reference proteome</keyword>
<keyword id="KW-0690">Ribosome biogenesis</keyword>
<keyword id="KW-0698">rRNA processing</keyword>
<keyword id="KW-0862">Zinc</keyword>
<organism>
    <name type="scientific">Desulforamulus reducens (strain ATCC BAA-1160 / DSM 100696 / MI-1)</name>
    <name type="common">Desulfotomaculum reducens</name>
    <dbReference type="NCBI Taxonomy" id="349161"/>
    <lineage>
        <taxon>Bacteria</taxon>
        <taxon>Bacillati</taxon>
        <taxon>Bacillota</taxon>
        <taxon>Clostridia</taxon>
        <taxon>Eubacteriales</taxon>
        <taxon>Peptococcaceae</taxon>
        <taxon>Desulforamulus</taxon>
    </lineage>
</organism>
<name>YBEY_DESRM</name>
<proteinExistence type="inferred from homology"/>
<dbReference type="EC" id="3.1.-.-" evidence="1"/>
<dbReference type="EMBL" id="CP000612">
    <property type="protein sequence ID" value="ABO50992.1"/>
    <property type="molecule type" value="Genomic_DNA"/>
</dbReference>
<dbReference type="RefSeq" id="WP_011878790.1">
    <property type="nucleotide sequence ID" value="NC_009253.1"/>
</dbReference>
<dbReference type="SMR" id="A4J7D9"/>
<dbReference type="STRING" id="349161.Dred_2482"/>
<dbReference type="KEGG" id="drm:Dred_2482"/>
<dbReference type="eggNOG" id="COG0319">
    <property type="taxonomic scope" value="Bacteria"/>
</dbReference>
<dbReference type="HOGENOM" id="CLU_106710_3_0_9"/>
<dbReference type="OrthoDB" id="9807740at2"/>
<dbReference type="Proteomes" id="UP000001556">
    <property type="component" value="Chromosome"/>
</dbReference>
<dbReference type="GO" id="GO:0005737">
    <property type="term" value="C:cytoplasm"/>
    <property type="evidence" value="ECO:0007669"/>
    <property type="project" value="UniProtKB-SubCell"/>
</dbReference>
<dbReference type="GO" id="GO:0004222">
    <property type="term" value="F:metalloendopeptidase activity"/>
    <property type="evidence" value="ECO:0007669"/>
    <property type="project" value="InterPro"/>
</dbReference>
<dbReference type="GO" id="GO:0004521">
    <property type="term" value="F:RNA endonuclease activity"/>
    <property type="evidence" value="ECO:0007669"/>
    <property type="project" value="UniProtKB-UniRule"/>
</dbReference>
<dbReference type="GO" id="GO:0008270">
    <property type="term" value="F:zinc ion binding"/>
    <property type="evidence" value="ECO:0007669"/>
    <property type="project" value="UniProtKB-UniRule"/>
</dbReference>
<dbReference type="GO" id="GO:0006364">
    <property type="term" value="P:rRNA processing"/>
    <property type="evidence" value="ECO:0007669"/>
    <property type="project" value="UniProtKB-UniRule"/>
</dbReference>
<dbReference type="Gene3D" id="3.40.390.30">
    <property type="entry name" value="Metalloproteases ('zincins'), catalytic domain"/>
    <property type="match status" value="1"/>
</dbReference>
<dbReference type="HAMAP" id="MF_00009">
    <property type="entry name" value="Endoribonucl_YbeY"/>
    <property type="match status" value="1"/>
</dbReference>
<dbReference type="InterPro" id="IPR023091">
    <property type="entry name" value="MetalPrtase_cat_dom_sf_prd"/>
</dbReference>
<dbReference type="InterPro" id="IPR002036">
    <property type="entry name" value="YbeY"/>
</dbReference>
<dbReference type="InterPro" id="IPR020549">
    <property type="entry name" value="YbeY_CS"/>
</dbReference>
<dbReference type="NCBIfam" id="TIGR00043">
    <property type="entry name" value="rRNA maturation RNase YbeY"/>
    <property type="match status" value="1"/>
</dbReference>
<dbReference type="PANTHER" id="PTHR46986">
    <property type="entry name" value="ENDORIBONUCLEASE YBEY, CHLOROPLASTIC"/>
    <property type="match status" value="1"/>
</dbReference>
<dbReference type="PANTHER" id="PTHR46986:SF1">
    <property type="entry name" value="ENDORIBONUCLEASE YBEY, CHLOROPLASTIC"/>
    <property type="match status" value="1"/>
</dbReference>
<dbReference type="Pfam" id="PF02130">
    <property type="entry name" value="YbeY"/>
    <property type="match status" value="1"/>
</dbReference>
<dbReference type="SUPFAM" id="SSF55486">
    <property type="entry name" value="Metalloproteases ('zincins'), catalytic domain"/>
    <property type="match status" value="1"/>
</dbReference>
<dbReference type="PROSITE" id="PS01306">
    <property type="entry name" value="UPF0054"/>
    <property type="match status" value="1"/>
</dbReference>
<evidence type="ECO:0000255" key="1">
    <source>
        <dbReference type="HAMAP-Rule" id="MF_00009"/>
    </source>
</evidence>